<protein>
    <recommendedName>
        <fullName evidence="1">Ribosomal RNA small subunit methyltransferase F</fullName>
        <ecNumber evidence="1">2.1.1.178</ecNumber>
    </recommendedName>
    <alternativeName>
        <fullName evidence="1">16S rRNA m5C1407 methyltransferase</fullName>
    </alternativeName>
    <alternativeName>
        <fullName evidence="1">rRNA (cytosine-C(5)-)-methyltransferase RsmF</fullName>
    </alternativeName>
</protein>
<reference key="1">
    <citation type="journal article" date="2009" name="PLoS Genet.">
        <title>Organised genome dynamics in the Escherichia coli species results in highly diverse adaptive paths.</title>
        <authorList>
            <person name="Touchon M."/>
            <person name="Hoede C."/>
            <person name="Tenaillon O."/>
            <person name="Barbe V."/>
            <person name="Baeriswyl S."/>
            <person name="Bidet P."/>
            <person name="Bingen E."/>
            <person name="Bonacorsi S."/>
            <person name="Bouchier C."/>
            <person name="Bouvet O."/>
            <person name="Calteau A."/>
            <person name="Chiapello H."/>
            <person name="Clermont O."/>
            <person name="Cruveiller S."/>
            <person name="Danchin A."/>
            <person name="Diard M."/>
            <person name="Dossat C."/>
            <person name="Karoui M.E."/>
            <person name="Frapy E."/>
            <person name="Garry L."/>
            <person name="Ghigo J.M."/>
            <person name="Gilles A.M."/>
            <person name="Johnson J."/>
            <person name="Le Bouguenec C."/>
            <person name="Lescat M."/>
            <person name="Mangenot S."/>
            <person name="Martinez-Jehanne V."/>
            <person name="Matic I."/>
            <person name="Nassif X."/>
            <person name="Oztas S."/>
            <person name="Petit M.A."/>
            <person name="Pichon C."/>
            <person name="Rouy Z."/>
            <person name="Ruf C.S."/>
            <person name="Schneider D."/>
            <person name="Tourret J."/>
            <person name="Vacherie B."/>
            <person name="Vallenet D."/>
            <person name="Medigue C."/>
            <person name="Rocha E.P.C."/>
            <person name="Denamur E."/>
        </authorList>
    </citation>
    <scope>NUCLEOTIDE SEQUENCE [LARGE SCALE GENOMIC DNA]</scope>
    <source>
        <strain>55989 / EAEC</strain>
    </source>
</reference>
<dbReference type="EC" id="2.1.1.178" evidence="1"/>
<dbReference type="EMBL" id="CU928145">
    <property type="protein sequence ID" value="CAU97871.1"/>
    <property type="molecule type" value="Genomic_DNA"/>
</dbReference>
<dbReference type="RefSeq" id="WP_000057022.1">
    <property type="nucleotide sequence ID" value="NC_011748.1"/>
</dbReference>
<dbReference type="SMR" id="B7L7N7"/>
<dbReference type="GeneID" id="75202662"/>
<dbReference type="KEGG" id="eck:EC55989_2012"/>
<dbReference type="HOGENOM" id="CLU_005316_6_2_6"/>
<dbReference type="Proteomes" id="UP000000746">
    <property type="component" value="Chromosome"/>
</dbReference>
<dbReference type="GO" id="GO:0005737">
    <property type="term" value="C:cytoplasm"/>
    <property type="evidence" value="ECO:0007669"/>
    <property type="project" value="UniProtKB-SubCell"/>
</dbReference>
<dbReference type="GO" id="GO:0003723">
    <property type="term" value="F:RNA binding"/>
    <property type="evidence" value="ECO:0007669"/>
    <property type="project" value="UniProtKB-KW"/>
</dbReference>
<dbReference type="GO" id="GO:0009383">
    <property type="term" value="F:rRNA (cytosine-C5-)-methyltransferase activity"/>
    <property type="evidence" value="ECO:0007669"/>
    <property type="project" value="TreeGrafter"/>
</dbReference>
<dbReference type="GO" id="GO:0070475">
    <property type="term" value="P:rRNA base methylation"/>
    <property type="evidence" value="ECO:0007669"/>
    <property type="project" value="TreeGrafter"/>
</dbReference>
<dbReference type="CDD" id="cd02440">
    <property type="entry name" value="AdoMet_MTases"/>
    <property type="match status" value="1"/>
</dbReference>
<dbReference type="FunFam" id="3.10.450.720:FF:000001">
    <property type="entry name" value="Ribosomal RNA small subunit methyltransferase F"/>
    <property type="match status" value="1"/>
</dbReference>
<dbReference type="FunFam" id="3.40.50.150:FF:000079">
    <property type="entry name" value="Ribosomal RNA small subunit methyltransferase F"/>
    <property type="match status" value="1"/>
</dbReference>
<dbReference type="Gene3D" id="3.10.450.720">
    <property type="match status" value="1"/>
</dbReference>
<dbReference type="Gene3D" id="3.40.50.150">
    <property type="entry name" value="Vaccinia Virus protein VP39"/>
    <property type="match status" value="1"/>
</dbReference>
<dbReference type="HAMAP" id="MF_01579">
    <property type="entry name" value="16SrRNA_methyltr_F"/>
    <property type="match status" value="1"/>
</dbReference>
<dbReference type="InterPro" id="IPR031341">
    <property type="entry name" value="Methyltr_RsmF_N"/>
</dbReference>
<dbReference type="InterPro" id="IPR049560">
    <property type="entry name" value="MeTrfase_RsmB-F_NOP2_cat"/>
</dbReference>
<dbReference type="InterPro" id="IPR001678">
    <property type="entry name" value="MeTrfase_RsmB-F_NOP2_dom"/>
</dbReference>
<dbReference type="InterPro" id="IPR027391">
    <property type="entry name" value="Nol1_Nop2_Fmu_2"/>
</dbReference>
<dbReference type="InterPro" id="IPR011023">
    <property type="entry name" value="Nop2p"/>
</dbReference>
<dbReference type="InterPro" id="IPR023267">
    <property type="entry name" value="RCMT"/>
</dbReference>
<dbReference type="InterPro" id="IPR023545">
    <property type="entry name" value="rRNA_ssu_MeTfrase_F"/>
</dbReference>
<dbReference type="InterPro" id="IPR018314">
    <property type="entry name" value="RsmB/NOL1/NOP2-like_CS"/>
</dbReference>
<dbReference type="InterPro" id="IPR029063">
    <property type="entry name" value="SAM-dependent_MTases_sf"/>
</dbReference>
<dbReference type="InterPro" id="IPR048457">
    <property type="entry name" value="YebU_pre-PUA_dom"/>
</dbReference>
<dbReference type="NCBIfam" id="TIGR00446">
    <property type="entry name" value="nop2p"/>
    <property type="match status" value="1"/>
</dbReference>
<dbReference type="NCBIfam" id="NF008898">
    <property type="entry name" value="PRK11933.1"/>
    <property type="match status" value="1"/>
</dbReference>
<dbReference type="PANTHER" id="PTHR22807:SF30">
    <property type="entry name" value="28S RRNA (CYTOSINE(4447)-C(5))-METHYLTRANSFERASE-RELATED"/>
    <property type="match status" value="1"/>
</dbReference>
<dbReference type="PANTHER" id="PTHR22807">
    <property type="entry name" value="NOP2 YEAST -RELATED NOL1/NOP2/FMU SUN DOMAIN-CONTAINING"/>
    <property type="match status" value="1"/>
</dbReference>
<dbReference type="Pfam" id="PF01189">
    <property type="entry name" value="Methyltr_RsmB-F"/>
    <property type="match status" value="1"/>
</dbReference>
<dbReference type="Pfam" id="PF17125">
    <property type="entry name" value="Methyltr_RsmF_N"/>
    <property type="match status" value="1"/>
</dbReference>
<dbReference type="Pfam" id="PF13636">
    <property type="entry name" value="Methyltranf_PUA"/>
    <property type="match status" value="1"/>
</dbReference>
<dbReference type="Pfam" id="PF21150">
    <property type="entry name" value="YebU_pre-PUA_dom"/>
    <property type="match status" value="1"/>
</dbReference>
<dbReference type="PRINTS" id="PR02008">
    <property type="entry name" value="RCMTFAMILY"/>
</dbReference>
<dbReference type="SUPFAM" id="SSF53335">
    <property type="entry name" value="S-adenosyl-L-methionine-dependent methyltransferases"/>
    <property type="match status" value="1"/>
</dbReference>
<dbReference type="PROSITE" id="PS01153">
    <property type="entry name" value="NOL1_NOP2_SUN"/>
    <property type="match status" value="1"/>
</dbReference>
<dbReference type="PROSITE" id="PS51686">
    <property type="entry name" value="SAM_MT_RSMB_NOP"/>
    <property type="match status" value="1"/>
</dbReference>
<keyword id="KW-0963">Cytoplasm</keyword>
<keyword id="KW-0489">Methyltransferase</keyword>
<keyword id="KW-1185">Reference proteome</keyword>
<keyword id="KW-0694">RNA-binding</keyword>
<keyword id="KW-0698">rRNA processing</keyword>
<keyword id="KW-0949">S-adenosyl-L-methionine</keyword>
<keyword id="KW-0808">Transferase</keyword>
<gene>
    <name evidence="1" type="primary">rsmF</name>
    <name type="ordered locus">EC55989_2012</name>
</gene>
<evidence type="ECO:0000255" key="1">
    <source>
        <dbReference type="HAMAP-Rule" id="MF_01579"/>
    </source>
</evidence>
<organism>
    <name type="scientific">Escherichia coli (strain 55989 / EAEC)</name>
    <dbReference type="NCBI Taxonomy" id="585055"/>
    <lineage>
        <taxon>Bacteria</taxon>
        <taxon>Pseudomonadati</taxon>
        <taxon>Pseudomonadota</taxon>
        <taxon>Gammaproteobacteria</taxon>
        <taxon>Enterobacterales</taxon>
        <taxon>Enterobacteriaceae</taxon>
        <taxon>Escherichia</taxon>
    </lineage>
</organism>
<sequence length="479" mass="53179">MAQHTVYFPDAFLTQMREAMPSTLSFDDFLAACQRPLRRSIRVNTLKISVADFLQLTAPYGWTLTPIPWCEEGFWIERDNEDALPLGSTAEHLSGLFYIQEASSMLPVAALFADDNAPQRVMDVAAAPGSKTTQIAARMNNEGAILANEFSASRVKVLHANISRCGISNVALTHFDGRVFGAAVPEMFDAILLDAPCSGEGVVRKDPDALKNWSPESNQEIAATQRELIDSAFHALRPGGTLVYSTCTLNQEENEAVCLWLKETYPDAVEFLPLGDLFPGANKALTEEGFLHVFPQIYDCEGFFVARLRKTQAIPALPAPKYKVGNFPFSPVKDREAGQIRQAAASVGLNWDGNLRLWQRDKELWLFPVGIEALIGKVRFSRLGIKLAETHNKGYRWQHEAVIALATPDNVNAFELTPQEAEEWYRGRDVYPQAAPVADDVLVTFQHQPIGLAKRIGSRLKNSYPRELVRDGKLFTGNA</sequence>
<name>RSMF_ECO55</name>
<proteinExistence type="inferred from homology"/>
<accession>B7L7N7</accession>
<feature type="chain" id="PRO_1000185641" description="Ribosomal RNA small subunit methyltransferase F">
    <location>
        <begin position="1"/>
        <end position="479"/>
    </location>
</feature>
<feature type="active site" description="Nucleophile" evidence="1">
    <location>
        <position position="247"/>
    </location>
</feature>
<feature type="binding site" evidence="1">
    <location>
        <begin position="125"/>
        <end position="131"/>
    </location>
    <ligand>
        <name>S-adenosyl-L-methionine</name>
        <dbReference type="ChEBI" id="CHEBI:59789"/>
    </ligand>
</feature>
<feature type="binding site" evidence="1">
    <location>
        <position position="149"/>
    </location>
    <ligand>
        <name>S-adenosyl-L-methionine</name>
        <dbReference type="ChEBI" id="CHEBI:59789"/>
    </ligand>
</feature>
<feature type="binding site" evidence="1">
    <location>
        <position position="176"/>
    </location>
    <ligand>
        <name>S-adenosyl-L-methionine</name>
        <dbReference type="ChEBI" id="CHEBI:59789"/>
    </ligand>
</feature>
<feature type="binding site" evidence="1">
    <location>
        <position position="194"/>
    </location>
    <ligand>
        <name>S-adenosyl-L-methionine</name>
        <dbReference type="ChEBI" id="CHEBI:59789"/>
    </ligand>
</feature>
<comment type="function">
    <text evidence="1">Specifically methylates the cytosine at position 1407 (m5C1407) of 16S rRNA.</text>
</comment>
<comment type="catalytic activity">
    <reaction evidence="1">
        <text>cytidine(1407) in 16S rRNA + S-adenosyl-L-methionine = 5-methylcytidine(1407) in 16S rRNA + S-adenosyl-L-homocysteine + H(+)</text>
        <dbReference type="Rhea" id="RHEA:42756"/>
        <dbReference type="Rhea" id="RHEA-COMP:10223"/>
        <dbReference type="Rhea" id="RHEA-COMP:10224"/>
        <dbReference type="ChEBI" id="CHEBI:15378"/>
        <dbReference type="ChEBI" id="CHEBI:57856"/>
        <dbReference type="ChEBI" id="CHEBI:59789"/>
        <dbReference type="ChEBI" id="CHEBI:74483"/>
        <dbReference type="ChEBI" id="CHEBI:82748"/>
        <dbReference type="EC" id="2.1.1.178"/>
    </reaction>
</comment>
<comment type="subcellular location">
    <subcellularLocation>
        <location evidence="1">Cytoplasm</location>
    </subcellularLocation>
</comment>
<comment type="similarity">
    <text evidence="1">Belongs to the class I-like SAM-binding methyltransferase superfamily. RsmB/NOP family.</text>
</comment>